<protein>
    <recommendedName>
        <fullName>C2 and GRAM domain-containing protein At5g50170</fullName>
    </recommendedName>
</protein>
<keyword id="KW-0472">Membrane</keyword>
<keyword id="KW-1185">Reference proteome</keyword>
<keyword id="KW-0677">Repeat</keyword>
<keyword id="KW-0812">Transmembrane</keyword>
<keyword id="KW-1133">Transmembrane helix</keyword>
<sequence>MRLYVYILQAKDLPAKETFAKLHVGRHKSKTRVARDTSSPIWNEEFVFRISDVDEGDDVVVSILHHEQQDHQSIVSTGLIGKVRIPLTSVAAEENQTLLPTWFVIEKPSDGKFVNIECGKILLSLSLQGKWESTSGEKVLNDKQDIINLEGVKELEGSPKDLISSRDGKRRKHHDGKHIMKNIVNHIDKLFHKKEEISKRLHDESSVGQSVNSNYEDATDQCSSSATCTGFEEGLDLMQSSDSEREEMPENLTGGVLVDQKYLVSPCELNKFLFTPSSQFRKELAELQGLSDVQEGPWTMMQEDTPRLTRVVTYMRAATKMVKAVKATENQVYRKASGKQFAVFVSVSTPDVPYGNTFKIELLYKILPETEPTAGGEASRLIISWGIQFSQSTIMKGMIEGGARQGLKESFEQFSNLLAKTYKTLDPAVVLDKEQVIATVQSEPKTDLKSAFLYFWSSSVICAVLLSVYVVVHMLHCEPSKIQGFEFYGLDLPDSFGELFSSGILVLLLERVYIMTVHFVQARLHRGRDQGVKANGKGWILTIALIKGTNLASVEATELFDPYVVFTCNGKTRTSSVKLQAQDPQWNEVIEFDAMEEPPSVLDVEVFDFDGPFDQGASLGHAEINFLKHTADELADLSVALVGNHAQASQSKLQLRIFLENKNGVETMKDYLSKVEKEVGKKLNIRSPQKNSAFQKLFGLPHEEFLLKEYTCYLKRKLPVQGKLFLSARIVAFYSNVFGHKTKFYFLWEDIDDIQVLPPTFASLGSPLLLIILKKNRGLDAKHGAKSQDDEGRLSFYFQSFVSFDATSRTIMALWKTRTLSVDHRAQIVEEDQDVADPFLLPEAVTVVSDADALMMSKVYTCDLPCDVELVMKIFGGGELERKIMEKSGCLSYASTTWESKKPGVYERRLSYKYNHYVSVFGGGVTCAQQKSPAPNDEGWILNEIVALHDVPFGDHFRVHIRYEVKKAGVDCKTSKCEVYLKIRWLKTIKFEQRISKSIMEKFRNRFKVIFDLFQKESVANSSLTLL</sequence>
<evidence type="ECO:0000255" key="1"/>
<evidence type="ECO:0000255" key="2">
    <source>
        <dbReference type="PROSITE-ProRule" id="PRU00041"/>
    </source>
</evidence>
<evidence type="ECO:0000255" key="3">
    <source>
        <dbReference type="PROSITE-ProRule" id="PRU01114"/>
    </source>
</evidence>
<evidence type="ECO:0000256" key="4">
    <source>
        <dbReference type="SAM" id="MobiDB-lite"/>
    </source>
</evidence>
<evidence type="ECO:0000305" key="5"/>
<accession>Q9FGS8</accession>
<reference key="1">
    <citation type="journal article" date="2000" name="DNA Res.">
        <title>Structural analysis of Arabidopsis thaliana chromosome 5. X. Sequence features of the regions of 3,076,755 bp covered by sixty P1 and TAC clones.</title>
        <authorList>
            <person name="Sato S."/>
            <person name="Nakamura Y."/>
            <person name="Kaneko T."/>
            <person name="Katoh T."/>
            <person name="Asamizu E."/>
            <person name="Kotani H."/>
            <person name="Tabata S."/>
        </authorList>
    </citation>
    <scope>NUCLEOTIDE SEQUENCE [LARGE SCALE GENOMIC DNA]</scope>
    <source>
        <strain>cv. Columbia</strain>
    </source>
</reference>
<reference key="2">
    <citation type="journal article" date="2017" name="Plant J.">
        <title>Araport11: a complete reannotation of the Arabidopsis thaliana reference genome.</title>
        <authorList>
            <person name="Cheng C.Y."/>
            <person name="Krishnakumar V."/>
            <person name="Chan A.P."/>
            <person name="Thibaud-Nissen F."/>
            <person name="Schobel S."/>
            <person name="Town C.D."/>
        </authorList>
    </citation>
    <scope>GENOME REANNOTATION</scope>
    <source>
        <strain>cv. Columbia</strain>
    </source>
</reference>
<reference key="3">
    <citation type="journal article" date="2003" name="Science">
        <title>Empirical analysis of transcriptional activity in the Arabidopsis genome.</title>
        <authorList>
            <person name="Yamada K."/>
            <person name="Lim J."/>
            <person name="Dale J.M."/>
            <person name="Chen H."/>
            <person name="Shinn P."/>
            <person name="Palm C.J."/>
            <person name="Southwick A.M."/>
            <person name="Wu H.C."/>
            <person name="Kim C.J."/>
            <person name="Nguyen M."/>
            <person name="Pham P.K."/>
            <person name="Cheuk R.F."/>
            <person name="Karlin-Newmann G."/>
            <person name="Liu S.X."/>
            <person name="Lam B."/>
            <person name="Sakano H."/>
            <person name="Wu T."/>
            <person name="Yu G."/>
            <person name="Miranda M."/>
            <person name="Quach H.L."/>
            <person name="Tripp M."/>
            <person name="Chang C.H."/>
            <person name="Lee J.M."/>
            <person name="Toriumi M.J."/>
            <person name="Chan M.M."/>
            <person name="Tang C.C."/>
            <person name="Onodera C.S."/>
            <person name="Deng J.M."/>
            <person name="Akiyama K."/>
            <person name="Ansari Y."/>
            <person name="Arakawa T."/>
            <person name="Banh J."/>
            <person name="Banno F."/>
            <person name="Bowser L."/>
            <person name="Brooks S.Y."/>
            <person name="Carninci P."/>
            <person name="Chao Q."/>
            <person name="Choy N."/>
            <person name="Enju A."/>
            <person name="Goldsmith A.D."/>
            <person name="Gurjal M."/>
            <person name="Hansen N.F."/>
            <person name="Hayashizaki Y."/>
            <person name="Johnson-Hopson C."/>
            <person name="Hsuan V.W."/>
            <person name="Iida K."/>
            <person name="Karnes M."/>
            <person name="Khan S."/>
            <person name="Koesema E."/>
            <person name="Ishida J."/>
            <person name="Jiang P.X."/>
            <person name="Jones T."/>
            <person name="Kawai J."/>
            <person name="Kamiya A."/>
            <person name="Meyers C."/>
            <person name="Nakajima M."/>
            <person name="Narusaka M."/>
            <person name="Seki M."/>
            <person name="Sakurai T."/>
            <person name="Satou M."/>
            <person name="Tamse R."/>
            <person name="Vaysberg M."/>
            <person name="Wallender E.K."/>
            <person name="Wong C."/>
            <person name="Yamamura Y."/>
            <person name="Yuan S."/>
            <person name="Shinozaki K."/>
            <person name="Davis R.W."/>
            <person name="Theologis A."/>
            <person name="Ecker J.R."/>
        </authorList>
    </citation>
    <scope>NUCLEOTIDE SEQUENCE [LARGE SCALE MRNA]</scope>
    <source>
        <strain>cv. Columbia</strain>
    </source>
</reference>
<gene>
    <name type="ordered locus">At5g50170</name>
    <name type="ORF">K6A12_3</name>
</gene>
<name>C2GR2_ARATH</name>
<organism>
    <name type="scientific">Arabidopsis thaliana</name>
    <name type="common">Mouse-ear cress</name>
    <dbReference type="NCBI Taxonomy" id="3702"/>
    <lineage>
        <taxon>Eukaryota</taxon>
        <taxon>Viridiplantae</taxon>
        <taxon>Streptophyta</taxon>
        <taxon>Embryophyta</taxon>
        <taxon>Tracheophyta</taxon>
        <taxon>Spermatophyta</taxon>
        <taxon>Magnoliopsida</taxon>
        <taxon>eudicotyledons</taxon>
        <taxon>Gunneridae</taxon>
        <taxon>Pentapetalae</taxon>
        <taxon>rosids</taxon>
        <taxon>malvids</taxon>
        <taxon>Brassicales</taxon>
        <taxon>Brassicaceae</taxon>
        <taxon>Camelineae</taxon>
        <taxon>Arabidopsis</taxon>
    </lineage>
</organism>
<proteinExistence type="evidence at transcript level"/>
<comment type="subcellular location">
    <subcellularLocation>
        <location evidence="5">Membrane</location>
        <topology evidence="5">Single-pass membrane protein</topology>
    </subcellularLocation>
</comment>
<dbReference type="EMBL" id="AB024031">
    <property type="protein sequence ID" value="BAB09388.1"/>
    <property type="molecule type" value="Genomic_DNA"/>
</dbReference>
<dbReference type="EMBL" id="CP002688">
    <property type="protein sequence ID" value="AED95906.1"/>
    <property type="molecule type" value="Genomic_DNA"/>
</dbReference>
<dbReference type="EMBL" id="AY056116">
    <property type="protein sequence ID" value="AAL07002.1"/>
    <property type="molecule type" value="mRNA"/>
</dbReference>
<dbReference type="EMBL" id="BT009696">
    <property type="protein sequence ID" value="AAP88330.1"/>
    <property type="molecule type" value="mRNA"/>
</dbReference>
<dbReference type="RefSeq" id="NP_199828.1">
    <property type="nucleotide sequence ID" value="NM_124396.3"/>
</dbReference>
<dbReference type="SMR" id="Q9FGS8"/>
<dbReference type="FunCoup" id="Q9FGS8">
    <property type="interactions" value="1022"/>
</dbReference>
<dbReference type="STRING" id="3702.Q9FGS8"/>
<dbReference type="iPTMnet" id="Q9FGS8"/>
<dbReference type="PaxDb" id="3702-AT5G50170.1"/>
<dbReference type="ProteomicsDB" id="240516"/>
<dbReference type="EnsemblPlants" id="AT5G50170.1">
    <property type="protein sequence ID" value="AT5G50170.1"/>
    <property type="gene ID" value="AT5G50170"/>
</dbReference>
<dbReference type="GeneID" id="835082"/>
<dbReference type="Gramene" id="AT5G50170.1">
    <property type="protein sequence ID" value="AT5G50170.1"/>
    <property type="gene ID" value="AT5G50170"/>
</dbReference>
<dbReference type="KEGG" id="ath:AT5G50170"/>
<dbReference type="Araport" id="AT5G50170"/>
<dbReference type="TAIR" id="AT5G50170"/>
<dbReference type="eggNOG" id="KOG1032">
    <property type="taxonomic scope" value="Eukaryota"/>
</dbReference>
<dbReference type="HOGENOM" id="CLU_009431_0_0_1"/>
<dbReference type="InParanoid" id="Q9FGS8"/>
<dbReference type="OMA" id="EQQSDWE"/>
<dbReference type="PhylomeDB" id="Q9FGS8"/>
<dbReference type="PRO" id="PR:Q9FGS8"/>
<dbReference type="Proteomes" id="UP000006548">
    <property type="component" value="Chromosome 5"/>
</dbReference>
<dbReference type="ExpressionAtlas" id="Q9FGS8">
    <property type="expression patterns" value="baseline and differential"/>
</dbReference>
<dbReference type="GO" id="GO:0016020">
    <property type="term" value="C:membrane"/>
    <property type="evidence" value="ECO:0007669"/>
    <property type="project" value="UniProtKB-SubCell"/>
</dbReference>
<dbReference type="CDD" id="cd00030">
    <property type="entry name" value="C2"/>
    <property type="match status" value="2"/>
</dbReference>
<dbReference type="Gene3D" id="2.60.40.150">
    <property type="entry name" value="C2 domain"/>
    <property type="match status" value="2"/>
</dbReference>
<dbReference type="Gene3D" id="2.30.29.30">
    <property type="entry name" value="Pleckstrin-homology domain (PH domain)/Phosphotyrosine-binding domain (PTB)"/>
    <property type="match status" value="1"/>
</dbReference>
<dbReference type="InterPro" id="IPR044511">
    <property type="entry name" value="At1g03370/At5g50170-like"/>
</dbReference>
<dbReference type="InterPro" id="IPR000008">
    <property type="entry name" value="C2_dom"/>
</dbReference>
<dbReference type="InterPro" id="IPR035892">
    <property type="entry name" value="C2_domain_sf"/>
</dbReference>
<dbReference type="InterPro" id="IPR004182">
    <property type="entry name" value="GRAM"/>
</dbReference>
<dbReference type="InterPro" id="IPR011993">
    <property type="entry name" value="PH-like_dom_sf"/>
</dbReference>
<dbReference type="InterPro" id="IPR031968">
    <property type="entry name" value="VASt"/>
</dbReference>
<dbReference type="PANTHER" id="PTHR46296">
    <property type="entry name" value="BNAA05G37250D PROTEIN"/>
    <property type="match status" value="1"/>
</dbReference>
<dbReference type="PANTHER" id="PTHR46296:SF7">
    <property type="entry name" value="C2 DOMAIN-CONTAINING PROTEIN"/>
    <property type="match status" value="1"/>
</dbReference>
<dbReference type="Pfam" id="PF00168">
    <property type="entry name" value="C2"/>
    <property type="match status" value="2"/>
</dbReference>
<dbReference type="Pfam" id="PF02893">
    <property type="entry name" value="GRAM"/>
    <property type="match status" value="1"/>
</dbReference>
<dbReference type="Pfam" id="PF16016">
    <property type="entry name" value="VASt"/>
    <property type="match status" value="2"/>
</dbReference>
<dbReference type="SMART" id="SM00239">
    <property type="entry name" value="C2"/>
    <property type="match status" value="2"/>
</dbReference>
<dbReference type="SMART" id="SM00568">
    <property type="entry name" value="GRAM"/>
    <property type="match status" value="1"/>
</dbReference>
<dbReference type="SUPFAM" id="SSF49562">
    <property type="entry name" value="C2 domain (Calcium/lipid-binding domain, CaLB)"/>
    <property type="match status" value="2"/>
</dbReference>
<dbReference type="PROSITE" id="PS50004">
    <property type="entry name" value="C2"/>
    <property type="match status" value="2"/>
</dbReference>
<dbReference type="PROSITE" id="PS51778">
    <property type="entry name" value="VAST"/>
    <property type="match status" value="2"/>
</dbReference>
<feature type="chain" id="PRO_0000395980" description="C2 and GRAM domain-containing protein At5g50170">
    <location>
        <begin position="1"/>
        <end position="1027"/>
    </location>
</feature>
<feature type="transmembrane region" description="Helical" evidence="1">
    <location>
        <begin position="452"/>
        <end position="472"/>
    </location>
</feature>
<feature type="domain" description="C2 1" evidence="2">
    <location>
        <begin position="1"/>
        <end position="103"/>
    </location>
</feature>
<feature type="domain" description="VASt 1" evidence="3">
    <location>
        <begin position="253"/>
        <end position="426"/>
    </location>
</feature>
<feature type="domain" description="C2 2" evidence="2">
    <location>
        <begin position="516"/>
        <end position="639"/>
    </location>
</feature>
<feature type="domain" description="GRAM">
    <location>
        <begin position="693"/>
        <end position="756"/>
    </location>
</feature>
<feature type="domain" description="VASt 2" evidence="3">
    <location>
        <begin position="855"/>
        <end position="1018"/>
    </location>
</feature>
<feature type="region of interest" description="Disordered" evidence="4">
    <location>
        <begin position="158"/>
        <end position="177"/>
    </location>
</feature>
<feature type="region of interest" description="Disordered" evidence="4">
    <location>
        <begin position="201"/>
        <end position="223"/>
    </location>
</feature>
<feature type="compositionally biased region" description="Basic and acidic residues" evidence="4">
    <location>
        <begin position="158"/>
        <end position="167"/>
    </location>
</feature>
<feature type="compositionally biased region" description="Basic residues" evidence="4">
    <location>
        <begin position="168"/>
        <end position="177"/>
    </location>
</feature>
<feature type="compositionally biased region" description="Polar residues" evidence="4">
    <location>
        <begin position="206"/>
        <end position="223"/>
    </location>
</feature>